<comment type="catalytic activity">
    <reaction evidence="1">
        <text>L-seryl-[protein] + ATP = O-phospho-L-seryl-[protein] + ADP + H(+)</text>
        <dbReference type="Rhea" id="RHEA:17989"/>
        <dbReference type="Rhea" id="RHEA-COMP:9863"/>
        <dbReference type="Rhea" id="RHEA-COMP:11604"/>
        <dbReference type="ChEBI" id="CHEBI:15378"/>
        <dbReference type="ChEBI" id="CHEBI:29999"/>
        <dbReference type="ChEBI" id="CHEBI:30616"/>
        <dbReference type="ChEBI" id="CHEBI:83421"/>
        <dbReference type="ChEBI" id="CHEBI:456216"/>
        <dbReference type="EC" id="2.7.11.1"/>
    </reaction>
</comment>
<comment type="catalytic activity">
    <reaction evidence="1">
        <text>L-threonyl-[protein] + ATP = O-phospho-L-threonyl-[protein] + ADP + H(+)</text>
        <dbReference type="Rhea" id="RHEA:46608"/>
        <dbReference type="Rhea" id="RHEA-COMP:11060"/>
        <dbReference type="Rhea" id="RHEA-COMP:11605"/>
        <dbReference type="ChEBI" id="CHEBI:15378"/>
        <dbReference type="ChEBI" id="CHEBI:30013"/>
        <dbReference type="ChEBI" id="CHEBI:30616"/>
        <dbReference type="ChEBI" id="CHEBI:61977"/>
        <dbReference type="ChEBI" id="CHEBI:456216"/>
        <dbReference type="EC" id="2.7.11.1"/>
    </reaction>
</comment>
<comment type="subunit">
    <text evidence="1">Interacts with HDR1.</text>
</comment>
<comment type="subcellular location">
    <subcellularLocation>
        <location evidence="2">Nucleus</location>
    </subcellularLocation>
</comment>
<comment type="tissue specificity">
    <text evidence="1">Strongly expressed in immature seeds. Mostly expressed in panicles, and to a lower extent, in leaf sheaths.</text>
</comment>
<comment type="similarity">
    <text evidence="3">Belongs to the protein kinase superfamily. Ser/Thr protein kinase family.</text>
</comment>
<dbReference type="EC" id="2.7.11.1" evidence="1"/>
<dbReference type="EMBL" id="CM000128">
    <property type="protein sequence ID" value="EAY89564.1"/>
    <property type="molecule type" value="Genomic_DNA"/>
</dbReference>
<dbReference type="SMR" id="A2XFF4"/>
<dbReference type="STRING" id="39946.A2XFF4"/>
<dbReference type="iPTMnet" id="A2XFF4"/>
<dbReference type="EnsemblPlants" id="BGIOSGA012387-TA">
    <property type="protein sequence ID" value="BGIOSGA012387-PA"/>
    <property type="gene ID" value="BGIOSGA012387"/>
</dbReference>
<dbReference type="EnsemblPlants" id="OsIR64_03g0013370.01">
    <property type="protein sequence ID" value="OsIR64_03g0013370.01"/>
    <property type="gene ID" value="OsIR64_03g0013370"/>
</dbReference>
<dbReference type="EnsemblPlants" id="OsIR64_03g0013370.02">
    <property type="protein sequence ID" value="OsIR64_03g0013370.02"/>
    <property type="gene ID" value="OsIR64_03g0013370"/>
</dbReference>
<dbReference type="EnsemblPlants" id="OsIR64_03g0013370.04">
    <property type="protein sequence ID" value="OsIR64_03g0013370.04"/>
    <property type="gene ID" value="OsIR64_03g0013370"/>
</dbReference>
<dbReference type="EnsemblPlants" id="OsKYG_03g0013570.01">
    <property type="protein sequence ID" value="OsKYG_03g0013570.01"/>
    <property type="gene ID" value="OsKYG_03g0013570"/>
</dbReference>
<dbReference type="EnsemblPlants" id="OsKYG_03g0013570.03">
    <property type="protein sequence ID" value="OsKYG_03g0013570.03"/>
    <property type="gene ID" value="OsKYG_03g0013570"/>
</dbReference>
<dbReference type="EnsemblPlants" id="OsLaMu_03g0013450.01">
    <property type="protein sequence ID" value="OsLaMu_03g0013450.01"/>
    <property type="gene ID" value="OsLaMu_03g0013450"/>
</dbReference>
<dbReference type="EnsemblPlants" id="OsLaMu_03g0013450.02">
    <property type="protein sequence ID" value="OsLaMu_03g0013450.02"/>
    <property type="gene ID" value="OsLaMu_03g0013450"/>
</dbReference>
<dbReference type="EnsemblPlants" id="OsLima_03g0013580.01">
    <property type="protein sequence ID" value="OsLima_03g0013580.01"/>
    <property type="gene ID" value="OsLima_03g0013580"/>
</dbReference>
<dbReference type="EnsemblPlants" id="OsLima_03g0013580.03">
    <property type="protein sequence ID" value="OsLima_03g0013580.03"/>
    <property type="gene ID" value="OsLima_03g0013580"/>
</dbReference>
<dbReference type="EnsemblPlants" id="OsLiXu_03g0013500.01">
    <property type="protein sequence ID" value="OsLiXu_03g0013500.01"/>
    <property type="gene ID" value="OsLiXu_03g0013500"/>
</dbReference>
<dbReference type="EnsemblPlants" id="OsLiXu_03g0013500.02">
    <property type="protein sequence ID" value="OsLiXu_03g0013500.02"/>
    <property type="gene ID" value="OsLiXu_03g0013500"/>
</dbReference>
<dbReference type="EnsemblPlants" id="OsLiXu_03g0013500.03">
    <property type="protein sequence ID" value="OsLiXu_03g0013500.03"/>
    <property type="gene ID" value="OsLiXu_03g0013500"/>
</dbReference>
<dbReference type="EnsemblPlants" id="OsMH63_03G013510_01">
    <property type="protein sequence ID" value="OsMH63_03G013510_01"/>
    <property type="gene ID" value="OsMH63_03G013510"/>
</dbReference>
<dbReference type="EnsemblPlants" id="OsMH63_03G013510_02">
    <property type="protein sequence ID" value="OsMH63_03G013510_02"/>
    <property type="gene ID" value="OsMH63_03G013510"/>
</dbReference>
<dbReference type="EnsemblPlants" id="OsMH63_03G013510_04">
    <property type="protein sequence ID" value="OsMH63_03G013510_04"/>
    <property type="gene ID" value="OsMH63_03G013510"/>
</dbReference>
<dbReference type="EnsemblPlants" id="OsMH63_03G013510_05">
    <property type="protein sequence ID" value="OsMH63_03G013510_05"/>
    <property type="gene ID" value="OsMH63_03G013510"/>
</dbReference>
<dbReference type="EnsemblPlants" id="OsPr106_03g0013460.01">
    <property type="protein sequence ID" value="OsPr106_03g0013460.01"/>
    <property type="gene ID" value="OsPr106_03g0013460"/>
</dbReference>
<dbReference type="EnsemblPlants" id="OsPr106_03g0013460.02">
    <property type="protein sequence ID" value="OsPr106_03g0013460.02"/>
    <property type="gene ID" value="OsPr106_03g0013460"/>
</dbReference>
<dbReference type="EnsemblPlants" id="OsPr106_03g0013460.04">
    <property type="protein sequence ID" value="OsPr106_03g0013460.04"/>
    <property type="gene ID" value="OsPr106_03g0013460"/>
</dbReference>
<dbReference type="EnsemblPlants" id="OsZS97_03G013450_02">
    <property type="protein sequence ID" value="OsZS97_03G013450_02"/>
    <property type="gene ID" value="OsZS97_03G013450"/>
</dbReference>
<dbReference type="EnsemblPlants" id="OsZS97_03G013450_06">
    <property type="protein sequence ID" value="OsZS97_03G013450_06"/>
    <property type="gene ID" value="OsZS97_03G013450"/>
</dbReference>
<dbReference type="Gramene" id="BGIOSGA012387-TA">
    <property type="protein sequence ID" value="BGIOSGA012387-PA"/>
    <property type="gene ID" value="BGIOSGA012387"/>
</dbReference>
<dbReference type="Gramene" id="OsIR64_03g0013370.01">
    <property type="protein sequence ID" value="OsIR64_03g0013370.01"/>
    <property type="gene ID" value="OsIR64_03g0013370"/>
</dbReference>
<dbReference type="Gramene" id="OsIR64_03g0013370.02">
    <property type="protein sequence ID" value="OsIR64_03g0013370.02"/>
    <property type="gene ID" value="OsIR64_03g0013370"/>
</dbReference>
<dbReference type="Gramene" id="OsIR64_03g0013370.04">
    <property type="protein sequence ID" value="OsIR64_03g0013370.04"/>
    <property type="gene ID" value="OsIR64_03g0013370"/>
</dbReference>
<dbReference type="Gramene" id="OsKYG_03g0013570.01">
    <property type="protein sequence ID" value="OsKYG_03g0013570.01"/>
    <property type="gene ID" value="OsKYG_03g0013570"/>
</dbReference>
<dbReference type="Gramene" id="OsKYG_03g0013570.03">
    <property type="protein sequence ID" value="OsKYG_03g0013570.03"/>
    <property type="gene ID" value="OsKYG_03g0013570"/>
</dbReference>
<dbReference type="Gramene" id="OsLaMu_03g0013450.01">
    <property type="protein sequence ID" value="OsLaMu_03g0013450.01"/>
    <property type="gene ID" value="OsLaMu_03g0013450"/>
</dbReference>
<dbReference type="Gramene" id="OsLaMu_03g0013450.02">
    <property type="protein sequence ID" value="OsLaMu_03g0013450.02"/>
    <property type="gene ID" value="OsLaMu_03g0013450"/>
</dbReference>
<dbReference type="Gramene" id="OsLima_03g0013580.01">
    <property type="protein sequence ID" value="OsLima_03g0013580.01"/>
    <property type="gene ID" value="OsLima_03g0013580"/>
</dbReference>
<dbReference type="Gramene" id="OsLima_03g0013580.03">
    <property type="protein sequence ID" value="OsLima_03g0013580.03"/>
    <property type="gene ID" value="OsLima_03g0013580"/>
</dbReference>
<dbReference type="Gramene" id="OsLiXu_03g0013500.01">
    <property type="protein sequence ID" value="OsLiXu_03g0013500.01"/>
    <property type="gene ID" value="OsLiXu_03g0013500"/>
</dbReference>
<dbReference type="Gramene" id="OsLiXu_03g0013500.02">
    <property type="protein sequence ID" value="OsLiXu_03g0013500.02"/>
    <property type="gene ID" value="OsLiXu_03g0013500"/>
</dbReference>
<dbReference type="Gramene" id="OsLiXu_03g0013500.03">
    <property type="protein sequence ID" value="OsLiXu_03g0013500.03"/>
    <property type="gene ID" value="OsLiXu_03g0013500"/>
</dbReference>
<dbReference type="Gramene" id="OsMH63_03G013510_01">
    <property type="protein sequence ID" value="OsMH63_03G013510_01"/>
    <property type="gene ID" value="OsMH63_03G013510"/>
</dbReference>
<dbReference type="Gramene" id="OsMH63_03G013510_02">
    <property type="protein sequence ID" value="OsMH63_03G013510_02"/>
    <property type="gene ID" value="OsMH63_03G013510"/>
</dbReference>
<dbReference type="Gramene" id="OsMH63_03G013510_04">
    <property type="protein sequence ID" value="OsMH63_03G013510_04"/>
    <property type="gene ID" value="OsMH63_03G013510"/>
</dbReference>
<dbReference type="Gramene" id="OsMH63_03G013510_05">
    <property type="protein sequence ID" value="OsMH63_03G013510_05"/>
    <property type="gene ID" value="OsMH63_03G013510"/>
</dbReference>
<dbReference type="Gramene" id="OsPr106_03g0013460.01">
    <property type="protein sequence ID" value="OsPr106_03g0013460.01"/>
    <property type="gene ID" value="OsPr106_03g0013460"/>
</dbReference>
<dbReference type="Gramene" id="OsPr106_03g0013460.02">
    <property type="protein sequence ID" value="OsPr106_03g0013460.02"/>
    <property type="gene ID" value="OsPr106_03g0013460"/>
</dbReference>
<dbReference type="Gramene" id="OsPr106_03g0013460.04">
    <property type="protein sequence ID" value="OsPr106_03g0013460.04"/>
    <property type="gene ID" value="OsPr106_03g0013460"/>
</dbReference>
<dbReference type="Gramene" id="OsZS97_03G013450_02">
    <property type="protein sequence ID" value="OsZS97_03G013450_02"/>
    <property type="gene ID" value="OsZS97_03G013450"/>
</dbReference>
<dbReference type="Gramene" id="OsZS97_03G013450_06">
    <property type="protein sequence ID" value="OsZS97_03G013450_06"/>
    <property type="gene ID" value="OsZS97_03G013450"/>
</dbReference>
<dbReference type="HOGENOM" id="CLU_000288_59_3_1"/>
<dbReference type="OMA" id="TRTITYC"/>
<dbReference type="Proteomes" id="UP000007015">
    <property type="component" value="Chromosome 3"/>
</dbReference>
<dbReference type="GO" id="GO:0005737">
    <property type="term" value="C:cytoplasm"/>
    <property type="evidence" value="ECO:0007669"/>
    <property type="project" value="TreeGrafter"/>
</dbReference>
<dbReference type="GO" id="GO:0005634">
    <property type="term" value="C:nucleus"/>
    <property type="evidence" value="ECO:0007669"/>
    <property type="project" value="UniProtKB-SubCell"/>
</dbReference>
<dbReference type="GO" id="GO:0005524">
    <property type="term" value="F:ATP binding"/>
    <property type="evidence" value="ECO:0007669"/>
    <property type="project" value="UniProtKB-KW"/>
</dbReference>
<dbReference type="GO" id="GO:0106310">
    <property type="term" value="F:protein serine kinase activity"/>
    <property type="evidence" value="ECO:0007669"/>
    <property type="project" value="RHEA"/>
</dbReference>
<dbReference type="GO" id="GO:0004674">
    <property type="term" value="F:protein serine/threonine kinase activity"/>
    <property type="evidence" value="ECO:0007669"/>
    <property type="project" value="UniProtKB-KW"/>
</dbReference>
<dbReference type="GO" id="GO:0035556">
    <property type="term" value="P:intracellular signal transduction"/>
    <property type="evidence" value="ECO:0007669"/>
    <property type="project" value="TreeGrafter"/>
</dbReference>
<dbReference type="CDD" id="cd12122">
    <property type="entry name" value="AMPKA_C"/>
    <property type="match status" value="1"/>
</dbReference>
<dbReference type="CDD" id="cd14079">
    <property type="entry name" value="STKc_AMPK_alpha"/>
    <property type="match status" value="1"/>
</dbReference>
<dbReference type="CDD" id="cd14335">
    <property type="entry name" value="UBA_SnRK1_plant"/>
    <property type="match status" value="1"/>
</dbReference>
<dbReference type="FunFam" id="3.30.200.20:FF:000042">
    <property type="entry name" value="Aurora kinase A"/>
    <property type="match status" value="1"/>
</dbReference>
<dbReference type="FunFam" id="1.10.510.10:FF:000204">
    <property type="entry name" value="Non-specific serine/threonine protein kinase"/>
    <property type="match status" value="1"/>
</dbReference>
<dbReference type="FunFam" id="3.30.310.80:FF:000006">
    <property type="entry name" value="Non-specific serine/threonine protein kinase"/>
    <property type="match status" value="1"/>
</dbReference>
<dbReference type="Gene3D" id="3.30.310.80">
    <property type="entry name" value="Kinase associated domain 1, KA1"/>
    <property type="match status" value="1"/>
</dbReference>
<dbReference type="Gene3D" id="1.10.510.10">
    <property type="entry name" value="Transferase(Phosphotransferase) domain 1"/>
    <property type="match status" value="1"/>
</dbReference>
<dbReference type="InterPro" id="IPR028375">
    <property type="entry name" value="KA1/Ssp2_C"/>
</dbReference>
<dbReference type="InterPro" id="IPR001772">
    <property type="entry name" value="KA1_dom"/>
</dbReference>
<dbReference type="InterPro" id="IPR011009">
    <property type="entry name" value="Kinase-like_dom_sf"/>
</dbReference>
<dbReference type="InterPro" id="IPR000719">
    <property type="entry name" value="Prot_kinase_dom"/>
</dbReference>
<dbReference type="InterPro" id="IPR017441">
    <property type="entry name" value="Protein_kinase_ATP_BS"/>
</dbReference>
<dbReference type="InterPro" id="IPR008271">
    <property type="entry name" value="Ser/Thr_kinase_AS"/>
</dbReference>
<dbReference type="InterPro" id="IPR015940">
    <property type="entry name" value="UBA"/>
</dbReference>
<dbReference type="PANTHER" id="PTHR24346">
    <property type="entry name" value="MAP/MICROTUBULE AFFINITY-REGULATING KINASE"/>
    <property type="match status" value="1"/>
</dbReference>
<dbReference type="PANTHER" id="PTHR24346:SF103">
    <property type="entry name" value="NON-SPECIFIC SERINE_THREONINE PROTEIN KINASE"/>
    <property type="match status" value="1"/>
</dbReference>
<dbReference type="Pfam" id="PF02149">
    <property type="entry name" value="KA1"/>
    <property type="match status" value="1"/>
</dbReference>
<dbReference type="Pfam" id="PF00069">
    <property type="entry name" value="Pkinase"/>
    <property type="match status" value="1"/>
</dbReference>
<dbReference type="Pfam" id="PF00627">
    <property type="entry name" value="UBA"/>
    <property type="match status" value="1"/>
</dbReference>
<dbReference type="SMART" id="SM00220">
    <property type="entry name" value="S_TKc"/>
    <property type="match status" value="1"/>
</dbReference>
<dbReference type="SUPFAM" id="SSF103243">
    <property type="entry name" value="KA1-like"/>
    <property type="match status" value="1"/>
</dbReference>
<dbReference type="SUPFAM" id="SSF56112">
    <property type="entry name" value="Protein kinase-like (PK-like)"/>
    <property type="match status" value="1"/>
</dbReference>
<dbReference type="PROSITE" id="PS50032">
    <property type="entry name" value="KA1"/>
    <property type="match status" value="1"/>
</dbReference>
<dbReference type="PROSITE" id="PS00107">
    <property type="entry name" value="PROTEIN_KINASE_ATP"/>
    <property type="match status" value="1"/>
</dbReference>
<dbReference type="PROSITE" id="PS50011">
    <property type="entry name" value="PROTEIN_KINASE_DOM"/>
    <property type="match status" value="1"/>
</dbReference>
<dbReference type="PROSITE" id="PS00108">
    <property type="entry name" value="PROTEIN_KINASE_ST"/>
    <property type="match status" value="1"/>
</dbReference>
<dbReference type="PROSITE" id="PS50030">
    <property type="entry name" value="UBA"/>
    <property type="match status" value="1"/>
</dbReference>
<feature type="chain" id="PRO_0000438040" description="Serine/threonine protein kinase OSK3">
    <location>
        <begin position="1"/>
        <end position="508"/>
    </location>
</feature>
<feature type="domain" description="Protein kinase" evidence="3">
    <location>
        <begin position="17"/>
        <end position="269"/>
    </location>
</feature>
<feature type="domain" description="UBA" evidence="4">
    <location>
        <begin position="290"/>
        <end position="330"/>
    </location>
</feature>
<feature type="domain" description="KA1" evidence="5">
    <location>
        <begin position="459"/>
        <end position="507"/>
    </location>
</feature>
<feature type="active site" description="Proton acceptor" evidence="3">
    <location>
        <position position="140"/>
    </location>
</feature>
<feature type="binding site" evidence="3">
    <location>
        <begin position="23"/>
        <end position="31"/>
    </location>
    <ligand>
        <name>ATP</name>
        <dbReference type="ChEBI" id="CHEBI:30616"/>
    </ligand>
</feature>
<feature type="binding site" evidence="3">
    <location>
        <position position="46"/>
    </location>
    <ligand>
        <name>ATP</name>
        <dbReference type="ChEBI" id="CHEBI:30616"/>
    </ligand>
</feature>
<gene>
    <name evidence="1" type="primary">OSK3</name>
    <name evidence="6" type="ORF">OsI_11096</name>
</gene>
<accession>A2XFF4</accession>
<proteinExistence type="inferred from homology"/>
<protein>
    <recommendedName>
        <fullName evidence="1">Serine/threonine protein kinase OSK3</fullName>
        <shortName evidence="1">OsK3</shortName>
        <ecNumber evidence="1">2.7.11.1</ecNumber>
    </recommendedName>
</protein>
<sequence length="508" mass="58250">MDGNAKGGGHSEALKNYNLGRTLGIGSFGKVKIAEHKLTGHRVAIKILNRRQMRNMEMEEKAKREIKILRLFIHPHIIRLYEVIYTPTDIYVVMEYCKFGELFDYIVEKGRLQEDEARRIFQQIISGVEYCHRNMVVHRDLKPENLLLDSKYNVKLADFGLSNVMHDGHFLKTSCGSPNYAAPEVISGKLYAGPEVDVWSCGVILYALLCGTLPFDDENIPNLFKKIKGGIYTLPSHLSALARDLIPRMLVVDPMKRITIREIREHQWFQIRLPRYLAVPPPDTAQQAKMIDEDTLQDVVNLGYGKDHVCESLRNRLQNEATVAYYLLLDNRFRATSGYLGADYQESLERNFNRFASSESASSNTRHYLPGSSDPHASGLRPHYPVERKWALGLQSRAQPREIMIEVLKALQDLNVSWKKNGQYNMKCRWSVGTQATDMLDVNNSFVDDSIIMDNGDVNGRLPAVIKFEIQLYKTRDEKYLLDMQRVTGPQLLFLDFCADFLTKLRVL</sequence>
<keyword id="KW-0067">ATP-binding</keyword>
<keyword id="KW-0418">Kinase</keyword>
<keyword id="KW-0547">Nucleotide-binding</keyword>
<keyword id="KW-0539">Nucleus</keyword>
<keyword id="KW-1185">Reference proteome</keyword>
<keyword id="KW-0723">Serine/threonine-protein kinase</keyword>
<keyword id="KW-0808">Transferase</keyword>
<reference key="1">
    <citation type="journal article" date="2005" name="PLoS Biol.">
        <title>The genomes of Oryza sativa: a history of duplications.</title>
        <authorList>
            <person name="Yu J."/>
            <person name="Wang J."/>
            <person name="Lin W."/>
            <person name="Li S."/>
            <person name="Li H."/>
            <person name="Zhou J."/>
            <person name="Ni P."/>
            <person name="Dong W."/>
            <person name="Hu S."/>
            <person name="Zeng C."/>
            <person name="Zhang J."/>
            <person name="Zhang Y."/>
            <person name="Li R."/>
            <person name="Xu Z."/>
            <person name="Li S."/>
            <person name="Li X."/>
            <person name="Zheng H."/>
            <person name="Cong L."/>
            <person name="Lin L."/>
            <person name="Yin J."/>
            <person name="Geng J."/>
            <person name="Li G."/>
            <person name="Shi J."/>
            <person name="Liu J."/>
            <person name="Lv H."/>
            <person name="Li J."/>
            <person name="Wang J."/>
            <person name="Deng Y."/>
            <person name="Ran L."/>
            <person name="Shi X."/>
            <person name="Wang X."/>
            <person name="Wu Q."/>
            <person name="Li C."/>
            <person name="Ren X."/>
            <person name="Wang J."/>
            <person name="Wang X."/>
            <person name="Li D."/>
            <person name="Liu D."/>
            <person name="Zhang X."/>
            <person name="Ji Z."/>
            <person name="Zhao W."/>
            <person name="Sun Y."/>
            <person name="Zhang Z."/>
            <person name="Bao J."/>
            <person name="Han Y."/>
            <person name="Dong L."/>
            <person name="Ji J."/>
            <person name="Chen P."/>
            <person name="Wu S."/>
            <person name="Liu J."/>
            <person name="Xiao Y."/>
            <person name="Bu D."/>
            <person name="Tan J."/>
            <person name="Yang L."/>
            <person name="Ye C."/>
            <person name="Zhang J."/>
            <person name="Xu J."/>
            <person name="Zhou Y."/>
            <person name="Yu Y."/>
            <person name="Zhang B."/>
            <person name="Zhuang S."/>
            <person name="Wei H."/>
            <person name="Liu B."/>
            <person name="Lei M."/>
            <person name="Yu H."/>
            <person name="Li Y."/>
            <person name="Xu H."/>
            <person name="Wei S."/>
            <person name="He X."/>
            <person name="Fang L."/>
            <person name="Zhang Z."/>
            <person name="Zhang Y."/>
            <person name="Huang X."/>
            <person name="Su Z."/>
            <person name="Tong W."/>
            <person name="Li J."/>
            <person name="Tong Z."/>
            <person name="Li S."/>
            <person name="Ye J."/>
            <person name="Wang L."/>
            <person name="Fang L."/>
            <person name="Lei T."/>
            <person name="Chen C.-S."/>
            <person name="Chen H.-C."/>
            <person name="Xu Z."/>
            <person name="Li H."/>
            <person name="Huang H."/>
            <person name="Zhang F."/>
            <person name="Xu H."/>
            <person name="Li N."/>
            <person name="Zhao C."/>
            <person name="Li S."/>
            <person name="Dong L."/>
            <person name="Huang Y."/>
            <person name="Li L."/>
            <person name="Xi Y."/>
            <person name="Qi Q."/>
            <person name="Li W."/>
            <person name="Zhang B."/>
            <person name="Hu W."/>
            <person name="Zhang Y."/>
            <person name="Tian X."/>
            <person name="Jiao Y."/>
            <person name="Liang X."/>
            <person name="Jin J."/>
            <person name="Gao L."/>
            <person name="Zheng W."/>
            <person name="Hao B."/>
            <person name="Liu S.-M."/>
            <person name="Wang W."/>
            <person name="Yuan L."/>
            <person name="Cao M."/>
            <person name="McDermott J."/>
            <person name="Samudrala R."/>
            <person name="Wang J."/>
            <person name="Wong G.K.-S."/>
            <person name="Yang H."/>
        </authorList>
    </citation>
    <scope>NUCLEOTIDE SEQUENCE [LARGE SCALE GENOMIC DNA]</scope>
    <source>
        <strain>cv. 93-11</strain>
    </source>
</reference>
<organism>
    <name type="scientific">Oryza sativa subsp. indica</name>
    <name type="common">Rice</name>
    <dbReference type="NCBI Taxonomy" id="39946"/>
    <lineage>
        <taxon>Eukaryota</taxon>
        <taxon>Viridiplantae</taxon>
        <taxon>Streptophyta</taxon>
        <taxon>Embryophyta</taxon>
        <taxon>Tracheophyta</taxon>
        <taxon>Spermatophyta</taxon>
        <taxon>Magnoliopsida</taxon>
        <taxon>Liliopsida</taxon>
        <taxon>Poales</taxon>
        <taxon>Poaceae</taxon>
        <taxon>BOP clade</taxon>
        <taxon>Oryzoideae</taxon>
        <taxon>Oryzeae</taxon>
        <taxon>Oryzinae</taxon>
        <taxon>Oryza</taxon>
        <taxon>Oryza sativa</taxon>
    </lineage>
</organism>
<evidence type="ECO:0000250" key="1">
    <source>
        <dbReference type="UniProtKB" id="Q852Q0"/>
    </source>
</evidence>
<evidence type="ECO:0000250" key="2">
    <source>
        <dbReference type="UniProtKB" id="Q852Q1"/>
    </source>
</evidence>
<evidence type="ECO:0000255" key="3">
    <source>
        <dbReference type="PROSITE-ProRule" id="PRU00159"/>
    </source>
</evidence>
<evidence type="ECO:0000255" key="4">
    <source>
        <dbReference type="PROSITE-ProRule" id="PRU00212"/>
    </source>
</evidence>
<evidence type="ECO:0000255" key="5">
    <source>
        <dbReference type="PROSITE-ProRule" id="PRU00565"/>
    </source>
</evidence>
<evidence type="ECO:0000312" key="6">
    <source>
        <dbReference type="EMBL" id="EAY89564.1"/>
    </source>
</evidence>
<name>OSK3_ORYSI</name>